<feature type="chain" id="PRO_1000123472" description="Phosphoserine aminotransferase">
    <location>
        <begin position="1"/>
        <end position="361"/>
    </location>
</feature>
<feature type="binding site" evidence="1">
    <location>
        <position position="43"/>
    </location>
    <ligand>
        <name>L-glutamate</name>
        <dbReference type="ChEBI" id="CHEBI:29985"/>
    </ligand>
</feature>
<feature type="binding site" evidence="1">
    <location>
        <begin position="77"/>
        <end position="78"/>
    </location>
    <ligand>
        <name>pyridoxal 5'-phosphate</name>
        <dbReference type="ChEBI" id="CHEBI:597326"/>
    </ligand>
</feature>
<feature type="binding site" evidence="1">
    <location>
        <position position="103"/>
    </location>
    <ligand>
        <name>pyridoxal 5'-phosphate</name>
        <dbReference type="ChEBI" id="CHEBI:597326"/>
    </ligand>
</feature>
<feature type="binding site" evidence="1">
    <location>
        <position position="153"/>
    </location>
    <ligand>
        <name>pyridoxal 5'-phosphate</name>
        <dbReference type="ChEBI" id="CHEBI:597326"/>
    </ligand>
</feature>
<feature type="binding site" evidence="1">
    <location>
        <position position="173"/>
    </location>
    <ligand>
        <name>pyridoxal 5'-phosphate</name>
        <dbReference type="ChEBI" id="CHEBI:597326"/>
    </ligand>
</feature>
<feature type="binding site" evidence="1">
    <location>
        <position position="196"/>
    </location>
    <ligand>
        <name>pyridoxal 5'-phosphate</name>
        <dbReference type="ChEBI" id="CHEBI:597326"/>
    </ligand>
</feature>
<feature type="binding site" evidence="1">
    <location>
        <begin position="238"/>
        <end position="239"/>
    </location>
    <ligand>
        <name>pyridoxal 5'-phosphate</name>
        <dbReference type="ChEBI" id="CHEBI:597326"/>
    </ligand>
</feature>
<feature type="modified residue" description="N6-(pyridoxal phosphate)lysine" evidence="1">
    <location>
        <position position="197"/>
    </location>
</feature>
<comment type="function">
    <text evidence="1">Catalyzes the reversible conversion of 3-phosphohydroxypyruvate to phosphoserine and of 3-hydroxy-2-oxo-4-phosphonooxybutanoate to phosphohydroxythreonine.</text>
</comment>
<comment type="catalytic activity">
    <reaction evidence="1">
        <text>O-phospho-L-serine + 2-oxoglutarate = 3-phosphooxypyruvate + L-glutamate</text>
        <dbReference type="Rhea" id="RHEA:14329"/>
        <dbReference type="ChEBI" id="CHEBI:16810"/>
        <dbReference type="ChEBI" id="CHEBI:18110"/>
        <dbReference type="ChEBI" id="CHEBI:29985"/>
        <dbReference type="ChEBI" id="CHEBI:57524"/>
        <dbReference type="EC" id="2.6.1.52"/>
    </reaction>
</comment>
<comment type="catalytic activity">
    <reaction evidence="1">
        <text>4-(phosphooxy)-L-threonine + 2-oxoglutarate = (R)-3-hydroxy-2-oxo-4-phosphooxybutanoate + L-glutamate</text>
        <dbReference type="Rhea" id="RHEA:16573"/>
        <dbReference type="ChEBI" id="CHEBI:16810"/>
        <dbReference type="ChEBI" id="CHEBI:29985"/>
        <dbReference type="ChEBI" id="CHEBI:58452"/>
        <dbReference type="ChEBI" id="CHEBI:58538"/>
        <dbReference type="EC" id="2.6.1.52"/>
    </reaction>
</comment>
<comment type="cofactor">
    <cofactor evidence="1">
        <name>pyridoxal 5'-phosphate</name>
        <dbReference type="ChEBI" id="CHEBI:597326"/>
    </cofactor>
    <text evidence="1">Binds 1 pyridoxal phosphate per subunit.</text>
</comment>
<comment type="pathway">
    <text evidence="1">Amino-acid biosynthesis; L-serine biosynthesis; L-serine from 3-phospho-D-glycerate: step 2/3.</text>
</comment>
<comment type="pathway">
    <text evidence="1">Cofactor biosynthesis; pyridoxine 5'-phosphate biosynthesis; pyridoxine 5'-phosphate from D-erythrose 4-phosphate: step 3/5.</text>
</comment>
<comment type="subunit">
    <text evidence="1">Homodimer.</text>
</comment>
<comment type="subcellular location">
    <subcellularLocation>
        <location evidence="1">Cytoplasm</location>
    </subcellularLocation>
</comment>
<comment type="similarity">
    <text evidence="1">Belongs to the class-V pyridoxal-phosphate-dependent aminotransferase family. SerC subfamily.</text>
</comment>
<gene>
    <name evidence="1" type="primary">serC</name>
    <name type="ordered locus">PA14_23270</name>
</gene>
<organism>
    <name type="scientific">Pseudomonas aeruginosa (strain UCBPP-PA14)</name>
    <dbReference type="NCBI Taxonomy" id="208963"/>
    <lineage>
        <taxon>Bacteria</taxon>
        <taxon>Pseudomonadati</taxon>
        <taxon>Pseudomonadota</taxon>
        <taxon>Gammaproteobacteria</taxon>
        <taxon>Pseudomonadales</taxon>
        <taxon>Pseudomonadaceae</taxon>
        <taxon>Pseudomonas</taxon>
    </lineage>
</organism>
<name>SERC_PSEAB</name>
<keyword id="KW-0028">Amino-acid biosynthesis</keyword>
<keyword id="KW-0032">Aminotransferase</keyword>
<keyword id="KW-0963">Cytoplasm</keyword>
<keyword id="KW-0663">Pyridoxal phosphate</keyword>
<keyword id="KW-0664">Pyridoxine biosynthesis</keyword>
<keyword id="KW-0718">Serine biosynthesis</keyword>
<keyword id="KW-0808">Transferase</keyword>
<protein>
    <recommendedName>
        <fullName evidence="1">Phosphoserine aminotransferase</fullName>
        <ecNumber evidence="1">2.6.1.52</ecNumber>
    </recommendedName>
    <alternativeName>
        <fullName evidence="1">Phosphohydroxythreonine aminotransferase</fullName>
        <shortName evidence="1">PSAT</shortName>
    </alternativeName>
</protein>
<proteinExistence type="inferred from homology"/>
<reference key="1">
    <citation type="journal article" date="2006" name="Genome Biol.">
        <title>Genomic analysis reveals that Pseudomonas aeruginosa virulence is combinatorial.</title>
        <authorList>
            <person name="Lee D.G."/>
            <person name="Urbach J.M."/>
            <person name="Wu G."/>
            <person name="Liberati N.T."/>
            <person name="Feinbaum R.L."/>
            <person name="Miyata S."/>
            <person name="Diggins L.T."/>
            <person name="He J."/>
            <person name="Saucier M."/>
            <person name="Deziel E."/>
            <person name="Friedman L."/>
            <person name="Li L."/>
            <person name="Grills G."/>
            <person name="Montgomery K."/>
            <person name="Kucherlapati R."/>
            <person name="Rahme L.G."/>
            <person name="Ausubel F.M."/>
        </authorList>
    </citation>
    <scope>NUCLEOTIDE SEQUENCE [LARGE SCALE GENOMIC DNA]</scope>
    <source>
        <strain>UCBPP-PA14</strain>
    </source>
</reference>
<evidence type="ECO:0000255" key="1">
    <source>
        <dbReference type="HAMAP-Rule" id="MF_00160"/>
    </source>
</evidence>
<accession>Q02PX3</accession>
<sequence>MSKRAFNFCAGPAALPDAVLQRAQAELLDWRGKGLSVMEMSHRSDDYVAIASKAEQDLRDLLDIPSDYKVLFLQGGASQQFAEIPLNLLPEDGVADYIDTGIWSKKAIEEARRYGTVNVAASAKEYDYFAIPGQNEWTLTKDAAYVHYASNETIGGLEFDWIPETGDVPLVTDMSSDILSRPLDVSRFGLIYAGAQKNIGPSGLVVVIVREDLLGRARSVCPTMLNYKIAADNGSMYNTPATYSWYLSGLVFEWLKEQGGVTAMEQRNRAKKDLLYKTIDASDFYTNPIQPSARSWMNVPFRLADERLDKPFLEGAEARGLLNLKGHRSVGGMRASIYNALGLDAVEALVAYMAEFEKEHG</sequence>
<dbReference type="EC" id="2.6.1.52" evidence="1"/>
<dbReference type="EMBL" id="CP000438">
    <property type="protein sequence ID" value="ABJ12392.1"/>
    <property type="molecule type" value="Genomic_DNA"/>
</dbReference>
<dbReference type="RefSeq" id="WP_003111764.1">
    <property type="nucleotide sequence ID" value="NZ_CP034244.1"/>
</dbReference>
<dbReference type="SMR" id="Q02PX3"/>
<dbReference type="KEGG" id="pau:PA14_23270"/>
<dbReference type="PseudoCAP" id="PA14_23270"/>
<dbReference type="HOGENOM" id="CLU_034866_0_2_6"/>
<dbReference type="BioCyc" id="PAER208963:G1G74-1937-MONOMER"/>
<dbReference type="UniPathway" id="UPA00135">
    <property type="reaction ID" value="UER00197"/>
</dbReference>
<dbReference type="UniPathway" id="UPA00244">
    <property type="reaction ID" value="UER00311"/>
</dbReference>
<dbReference type="Proteomes" id="UP000000653">
    <property type="component" value="Chromosome"/>
</dbReference>
<dbReference type="GO" id="GO:0005737">
    <property type="term" value="C:cytoplasm"/>
    <property type="evidence" value="ECO:0007669"/>
    <property type="project" value="UniProtKB-SubCell"/>
</dbReference>
<dbReference type="GO" id="GO:0004648">
    <property type="term" value="F:O-phospho-L-serine:2-oxoglutarate aminotransferase activity"/>
    <property type="evidence" value="ECO:0007669"/>
    <property type="project" value="UniProtKB-UniRule"/>
</dbReference>
<dbReference type="GO" id="GO:0030170">
    <property type="term" value="F:pyridoxal phosphate binding"/>
    <property type="evidence" value="ECO:0007669"/>
    <property type="project" value="UniProtKB-UniRule"/>
</dbReference>
<dbReference type="GO" id="GO:0006564">
    <property type="term" value="P:L-serine biosynthetic process"/>
    <property type="evidence" value="ECO:0007669"/>
    <property type="project" value="UniProtKB-UniRule"/>
</dbReference>
<dbReference type="GO" id="GO:0008615">
    <property type="term" value="P:pyridoxine biosynthetic process"/>
    <property type="evidence" value="ECO:0007669"/>
    <property type="project" value="UniProtKB-UniRule"/>
</dbReference>
<dbReference type="CDD" id="cd00611">
    <property type="entry name" value="PSAT_like"/>
    <property type="match status" value="1"/>
</dbReference>
<dbReference type="FunFam" id="3.40.640.10:FF:000010">
    <property type="entry name" value="Phosphoserine aminotransferase"/>
    <property type="match status" value="1"/>
</dbReference>
<dbReference type="FunFam" id="3.90.1150.10:FF:000006">
    <property type="entry name" value="Phosphoserine aminotransferase"/>
    <property type="match status" value="1"/>
</dbReference>
<dbReference type="Gene3D" id="3.90.1150.10">
    <property type="entry name" value="Aspartate Aminotransferase, domain 1"/>
    <property type="match status" value="1"/>
</dbReference>
<dbReference type="Gene3D" id="3.40.640.10">
    <property type="entry name" value="Type I PLP-dependent aspartate aminotransferase-like (Major domain)"/>
    <property type="match status" value="1"/>
</dbReference>
<dbReference type="HAMAP" id="MF_00160">
    <property type="entry name" value="SerC_aminotrans_5"/>
    <property type="match status" value="1"/>
</dbReference>
<dbReference type="InterPro" id="IPR000192">
    <property type="entry name" value="Aminotrans_V_dom"/>
</dbReference>
<dbReference type="InterPro" id="IPR022278">
    <property type="entry name" value="Pser_aminoTfrase"/>
</dbReference>
<dbReference type="InterPro" id="IPR015424">
    <property type="entry name" value="PyrdxlP-dep_Trfase"/>
</dbReference>
<dbReference type="InterPro" id="IPR015421">
    <property type="entry name" value="PyrdxlP-dep_Trfase_major"/>
</dbReference>
<dbReference type="InterPro" id="IPR015422">
    <property type="entry name" value="PyrdxlP-dep_Trfase_small"/>
</dbReference>
<dbReference type="NCBIfam" id="NF003764">
    <property type="entry name" value="PRK05355.1"/>
    <property type="match status" value="1"/>
</dbReference>
<dbReference type="NCBIfam" id="TIGR01364">
    <property type="entry name" value="serC_1"/>
    <property type="match status" value="1"/>
</dbReference>
<dbReference type="PANTHER" id="PTHR43247">
    <property type="entry name" value="PHOSPHOSERINE AMINOTRANSFERASE"/>
    <property type="match status" value="1"/>
</dbReference>
<dbReference type="PANTHER" id="PTHR43247:SF1">
    <property type="entry name" value="PHOSPHOSERINE AMINOTRANSFERASE"/>
    <property type="match status" value="1"/>
</dbReference>
<dbReference type="Pfam" id="PF00266">
    <property type="entry name" value="Aminotran_5"/>
    <property type="match status" value="1"/>
</dbReference>
<dbReference type="PIRSF" id="PIRSF000525">
    <property type="entry name" value="SerC"/>
    <property type="match status" value="1"/>
</dbReference>
<dbReference type="SUPFAM" id="SSF53383">
    <property type="entry name" value="PLP-dependent transferases"/>
    <property type="match status" value="1"/>
</dbReference>